<reference key="1">
    <citation type="journal article" date="1998" name="Science">
        <title>Genome sequence of the nematode C. elegans: a platform for investigating biology.</title>
        <authorList>
            <consortium name="The C. elegans sequencing consortium"/>
        </authorList>
    </citation>
    <scope>NUCLEOTIDE SEQUENCE [LARGE SCALE GENOMIC DNA]</scope>
    <source>
        <strain>Bristol N2</strain>
    </source>
</reference>
<reference key="2">
    <citation type="journal article" date="2004" name="FASEB J.">
        <title>Functional genomic analysis of the ADP-ribosylation factor family of GTPases: phylogeny among diverse eukaryotes and function in C. elegans.</title>
        <authorList>
            <person name="Li Y."/>
            <person name="Kelly W.G."/>
            <person name="Logsdon J.M. Jr."/>
            <person name="Schurko A.M."/>
            <person name="Harfe B.D."/>
            <person name="Hill-Harfe K.L."/>
            <person name="Kahn R.A."/>
        </authorList>
    </citation>
    <scope>FUNCTION</scope>
    <scope>TISSUE SPECIFICITY</scope>
    <scope>DEVELOPMENTAL STAGE</scope>
</reference>
<reference key="3">
    <citation type="journal article" date="2005" name="Mol. Biol. Cell">
        <title>Involvement of the actin cytoskeleton and homotypic membrane fusion in ER dynamics in Caenorhabditis elegans.</title>
        <authorList>
            <person name="Poteryaev D."/>
            <person name="Squirrell J.M."/>
            <person name="Campbell J.M."/>
            <person name="White J.G."/>
            <person name="Spang A."/>
        </authorList>
    </citation>
    <scope>FUNCTION</scope>
    <scope>DISRUPTION PHENOTYPE</scope>
</reference>
<reference key="4">
    <citation type="journal article" date="2011" name="Curr. Biol.">
        <title>The Arf GAP CNT-2 regulates the apoptotic fate in C. elegans asymmetric neuroblast divisions.</title>
        <authorList>
            <person name="Singhvi A."/>
            <person name="Teuliere J."/>
            <person name="Talavera K."/>
            <person name="Cordes S."/>
            <person name="Ou G."/>
            <person name="Vale R.D."/>
            <person name="Prasad B.C."/>
            <person name="Clark S.G."/>
            <person name="Garriga G."/>
        </authorList>
    </citation>
    <scope>FUNCTION</scope>
    <scope>DISRUPTION PHENOTYPE</scope>
</reference>
<reference key="5">
    <citation type="journal article" date="2012" name="Nature">
        <title>Programmed elimination of cells by caspase-independent cell extrusion in C. elegans.</title>
        <authorList>
            <person name="Denning D.P."/>
            <person name="Hatch V."/>
            <person name="Horvitz H.R."/>
        </authorList>
    </citation>
    <scope>FUNCTION</scope>
</reference>
<reference key="6">
    <citation type="journal article" date="2014" name="EMBO J.">
        <title>The small GTPase Arf1 modulates mitochondrial morphology and function.</title>
        <authorList>
            <person name="Ackema K.B."/>
            <person name="Hench J."/>
            <person name="Boeckler S."/>
            <person name="Wang S.C."/>
            <person name="Sauder U."/>
            <person name="Mergentaler H."/>
            <person name="Westermann B."/>
            <person name="Bard F."/>
            <person name="Frank S."/>
            <person name="Spang A."/>
        </authorList>
    </citation>
    <scope>FUNCTION</scope>
    <scope>DISRUPTION PHENOTYPE</scope>
</reference>
<gene>
    <name evidence="10" type="primary">arf-1</name>
    <name evidence="10" type="synonym">arf-1.2</name>
    <name evidence="10" type="ORF">B0336.2</name>
</gene>
<comment type="function">
    <text evidence="1 4 5 6 7 9">Small GTPase involved in protein trafficking between different compartments (By similarity). Modulates vesicle budding and uncoating within the Golgi complex (By similarity). In its GTP-bound form, triggers the recruitment of coatomer proteins to the Golgi membrane (By similarity). The hydrolysis of ARF1-bound GTP, which is mediated by ARFGAPs proteins, is required for dissociation of coat proteins from Golgi membranes and vesicles (By similarity). Involved in endoplasmic reticulum dynamics during embryogenesis (PubMed:15716356). Also required for adult germline function (PubMed:15576487). Plays a role in cell shedding during embryogenesis probably by promoting the endocytosis of cell adhesion molecules (PubMed:22801495). During neurogenesis, involved in cell autonomous Q.p neuroblast asymmetric divisions that generate one precursor cell and one apoptotic cell, probably by controlling endocytosis (PubMed:21596567). Plays a role in maintaining mitochondrial morphology (PubMed:25190516).</text>
</comment>
<comment type="catalytic activity">
    <reaction evidence="1">
        <text>GTP + H2O = GDP + phosphate + H(+)</text>
        <dbReference type="Rhea" id="RHEA:19669"/>
        <dbReference type="ChEBI" id="CHEBI:15377"/>
        <dbReference type="ChEBI" id="CHEBI:15378"/>
        <dbReference type="ChEBI" id="CHEBI:37565"/>
        <dbReference type="ChEBI" id="CHEBI:43474"/>
        <dbReference type="ChEBI" id="CHEBI:58189"/>
        <dbReference type="EC" id="3.6.5.2"/>
    </reaction>
</comment>
<comment type="activity regulation">
    <text evidence="1">Alternates between an inactive GDP-bound form and an active GTP-bound form (By similarity). Activated by a guanine nucleotide-exchange factor (GEF) and inactivated by GTPase-activating protein (GAP) (By similarity).</text>
</comment>
<comment type="subcellular location">
    <subcellularLocation>
        <location evidence="1">Golgi apparatus membrane</location>
        <topology evidence="1">Lipid-anchor</topology>
        <orientation evidence="8">Cytoplasmic side</orientation>
    </subcellularLocation>
    <text evidence="2">In the GDP-bound form, associates transiently with the membranes via its myristoylated N-terminus where guanine nucleotide-exchange factor (GEF)-mediated nucleotide exchange occurs (By similarity). Following nucleotide exchange, the GTP-bound form undergoes a conformational change, leading to the exposure of a myristoylated N-terminal amphipathic helix that provides stable membrane anchorage (By similarity).</text>
</comment>
<comment type="tissue specificity">
    <text evidence="4">Expressed in hypodermis, intestine, spermatheca, uterus, gonadal sheath, vulva cells, pharynx muscle, body wall muscle, head neurons, ventral nerve cord.</text>
</comment>
<comment type="developmental stage">
    <text evidence="4">First detected in very young embryos with as little as 48-64 cells.</text>
</comment>
<comment type="disruption phenotype">
    <text evidence="5 6 7">Death during embryogenesis (PubMed:15716356). Some muscle differentiation occurs although it is poorly organized and little elongation or morphogenesis is evident (PubMed:15716356). Extra A/PVM neurons are produced from the precursor Q.pp, which is normally fated to die, acquiring the fate of its sister Q.pa (PubMed:21596567). Q.pa and Q.pp have almost similar size caused by a loss of Q.p asymmetric cell division (PubMed:21596567). In oocytes, plasma membrane localization of rme-2 is impaired resulting in the loss of vit-2 uptake which accumulates in the pseudocoelom (PubMed:21596567). RNAi-mediated knockdown results in a hyper-connected mitochondrial network in body wall muscle cells (PubMed:25190516).</text>
</comment>
<comment type="similarity">
    <text evidence="8">Belongs to the small GTPase superfamily. Arf family.</text>
</comment>
<proteinExistence type="evidence at transcript level"/>
<sequence length="181" mass="20522">MGNVFGSLFKGLFGKREMRILMVGLDAAGKTTILYKLKLGEIVTTIPTIGFNVETVEYKNISFTVWDVGGQDKIRPLWRHYFQNTQGLIFVVDSNDRERVGEAREELMRMLAEDELRDAVLLVFANKQDLPQAMNAAEVTDKLGLHSLRNRSWYIQATCATSGDGLYEGLDWLSNQLKNRS</sequence>
<keyword id="KW-0931">ER-Golgi transport</keyword>
<keyword id="KW-0333">Golgi apparatus</keyword>
<keyword id="KW-0342">GTP-binding</keyword>
<keyword id="KW-0378">Hydrolase</keyword>
<keyword id="KW-0449">Lipoprotein</keyword>
<keyword id="KW-0472">Membrane</keyword>
<keyword id="KW-0519">Myristate</keyword>
<keyword id="KW-0547">Nucleotide-binding</keyword>
<keyword id="KW-0653">Protein transport</keyword>
<keyword id="KW-1185">Reference proteome</keyword>
<keyword id="KW-0813">Transport</keyword>
<feature type="initiator methionine" description="Removed" evidence="3">
    <location>
        <position position="1"/>
    </location>
</feature>
<feature type="chain" id="PRO_0000207405" description="ADP-ribosylation factor 1-like 2">
    <location>
        <begin position="2"/>
        <end position="181"/>
    </location>
</feature>
<feature type="region of interest" description="Important for the stable binding to the membranes" evidence="2">
    <location>
        <begin position="3"/>
        <end position="16"/>
    </location>
</feature>
<feature type="binding site" evidence="1">
    <location>
        <begin position="24"/>
        <end position="32"/>
    </location>
    <ligand>
        <name>GTP</name>
        <dbReference type="ChEBI" id="CHEBI:37565"/>
    </ligand>
</feature>
<feature type="binding site" evidence="1">
    <location>
        <begin position="126"/>
        <end position="129"/>
    </location>
    <ligand>
        <name>GTP</name>
        <dbReference type="ChEBI" id="CHEBI:37565"/>
    </ligand>
</feature>
<feature type="binding site" evidence="1">
    <location>
        <position position="160"/>
    </location>
    <ligand>
        <name>GTP</name>
        <dbReference type="ChEBI" id="CHEBI:37565"/>
    </ligand>
</feature>
<feature type="lipid moiety-binding region" description="N-myristoyl glycine" evidence="3">
    <location>
        <position position="2"/>
    </location>
</feature>
<dbReference type="EC" id="3.6.5.2" evidence="1"/>
<dbReference type="EMBL" id="BX284603">
    <property type="protein sequence ID" value="CCD61516.1"/>
    <property type="molecule type" value="Genomic_DNA"/>
</dbReference>
<dbReference type="PIR" id="T15341">
    <property type="entry name" value="T15341"/>
</dbReference>
<dbReference type="RefSeq" id="NP_001367325.1">
    <property type="nucleotide sequence ID" value="NM_001379728.2"/>
</dbReference>
<dbReference type="RefSeq" id="NP_498235.1">
    <property type="nucleotide sequence ID" value="NM_065834.3"/>
</dbReference>
<dbReference type="SMR" id="Q10943"/>
<dbReference type="BioGRID" id="41027">
    <property type="interactions" value="19"/>
</dbReference>
<dbReference type="DIP" id="DIP-24528N"/>
<dbReference type="FunCoup" id="Q10943">
    <property type="interactions" value="3568"/>
</dbReference>
<dbReference type="IntAct" id="Q10943">
    <property type="interactions" value="3"/>
</dbReference>
<dbReference type="STRING" id="6239.B0336.2.3"/>
<dbReference type="PaxDb" id="6239-B0336.2.1"/>
<dbReference type="PeptideAtlas" id="Q10943"/>
<dbReference type="EnsemblMetazoa" id="B0336.2.1">
    <property type="protein sequence ID" value="B0336.2.1"/>
    <property type="gene ID" value="WBGene00000182"/>
</dbReference>
<dbReference type="EnsemblMetazoa" id="B0336.2.2">
    <property type="protein sequence ID" value="B0336.2.2"/>
    <property type="gene ID" value="WBGene00000182"/>
</dbReference>
<dbReference type="GeneID" id="175801"/>
<dbReference type="UCSC" id="B0336.2.1">
    <property type="organism name" value="c. elegans"/>
</dbReference>
<dbReference type="AGR" id="WB:WBGene00000182"/>
<dbReference type="WormBase" id="B0336.2">
    <property type="protein sequence ID" value="CE00696"/>
    <property type="gene ID" value="WBGene00000182"/>
    <property type="gene designation" value="arf-1"/>
</dbReference>
<dbReference type="eggNOG" id="KOG0070">
    <property type="taxonomic scope" value="Eukaryota"/>
</dbReference>
<dbReference type="GeneTree" id="ENSGT00950000183080"/>
<dbReference type="HOGENOM" id="CLU_040729_9_3_1"/>
<dbReference type="InParanoid" id="Q10943"/>
<dbReference type="OMA" id="HYYANTN"/>
<dbReference type="OrthoDB" id="2011769at2759"/>
<dbReference type="PhylomeDB" id="Q10943"/>
<dbReference type="Reactome" id="R-CEL-1660514">
    <property type="pathway name" value="Synthesis of PIPs at the Golgi membrane"/>
</dbReference>
<dbReference type="Reactome" id="R-CEL-199992">
    <property type="pathway name" value="trans-Golgi Network Vesicle Budding"/>
</dbReference>
<dbReference type="Reactome" id="R-CEL-432720">
    <property type="pathway name" value="Lysosome Vesicle Biogenesis"/>
</dbReference>
<dbReference type="Reactome" id="R-CEL-432722">
    <property type="pathway name" value="Golgi Associated Vesicle Biogenesis"/>
</dbReference>
<dbReference type="Reactome" id="R-CEL-6807878">
    <property type="pathway name" value="COPI-mediated anterograde transport"/>
</dbReference>
<dbReference type="Reactome" id="R-CEL-6811434">
    <property type="pathway name" value="COPI-dependent Golgi-to-ER retrograde traffic"/>
</dbReference>
<dbReference type="SignaLink" id="Q10943"/>
<dbReference type="PRO" id="PR:Q10943"/>
<dbReference type="Proteomes" id="UP000001940">
    <property type="component" value="Chromosome III"/>
</dbReference>
<dbReference type="Bgee" id="WBGene00000182">
    <property type="expression patterns" value="Expressed in pharyngeal muscle cell (C elegans) and 4 other cell types or tissues"/>
</dbReference>
<dbReference type="GO" id="GO:0005737">
    <property type="term" value="C:cytoplasm"/>
    <property type="evidence" value="ECO:0000318"/>
    <property type="project" value="GO_Central"/>
</dbReference>
<dbReference type="GO" id="GO:0005783">
    <property type="term" value="C:endoplasmic reticulum"/>
    <property type="evidence" value="ECO:0000314"/>
    <property type="project" value="UniProtKB"/>
</dbReference>
<dbReference type="GO" id="GO:0000139">
    <property type="term" value="C:Golgi membrane"/>
    <property type="evidence" value="ECO:0007669"/>
    <property type="project" value="UniProtKB-SubCell"/>
</dbReference>
<dbReference type="GO" id="GO:0005886">
    <property type="term" value="C:plasma membrane"/>
    <property type="evidence" value="ECO:0000318"/>
    <property type="project" value="GO_Central"/>
</dbReference>
<dbReference type="GO" id="GO:0005525">
    <property type="term" value="F:GTP binding"/>
    <property type="evidence" value="ECO:0000318"/>
    <property type="project" value="GO_Central"/>
</dbReference>
<dbReference type="GO" id="GO:0003924">
    <property type="term" value="F:GTPase activity"/>
    <property type="evidence" value="ECO:0007669"/>
    <property type="project" value="InterPro"/>
</dbReference>
<dbReference type="GO" id="GO:0009792">
    <property type="term" value="P:embryo development ending in birth or egg hatching"/>
    <property type="evidence" value="ECO:0000315"/>
    <property type="project" value="UniProtKB"/>
</dbReference>
<dbReference type="GO" id="GO:0007276">
    <property type="term" value="P:gamete generation"/>
    <property type="evidence" value="ECO:0000315"/>
    <property type="project" value="UniProtKB"/>
</dbReference>
<dbReference type="GO" id="GO:0006886">
    <property type="term" value="P:intracellular protein transport"/>
    <property type="evidence" value="ECO:0000315"/>
    <property type="project" value="WormBase"/>
</dbReference>
<dbReference type="GO" id="GO:0007005">
    <property type="term" value="P:mitochondrion organization"/>
    <property type="evidence" value="ECO:0000315"/>
    <property type="project" value="WormBase"/>
</dbReference>
<dbReference type="GO" id="GO:0048599">
    <property type="term" value="P:oocyte development"/>
    <property type="evidence" value="ECO:0000315"/>
    <property type="project" value="WormBase"/>
</dbReference>
<dbReference type="GO" id="GO:1904748">
    <property type="term" value="P:regulation of apoptotic process involved in development"/>
    <property type="evidence" value="ECO:0000316"/>
    <property type="project" value="UniProtKB"/>
</dbReference>
<dbReference type="GO" id="GO:0048259">
    <property type="term" value="P:regulation of receptor-mediated endocytosis"/>
    <property type="evidence" value="ECO:0000316"/>
    <property type="project" value="WormBase"/>
</dbReference>
<dbReference type="GO" id="GO:0016192">
    <property type="term" value="P:vesicle-mediated transport"/>
    <property type="evidence" value="ECO:0000318"/>
    <property type="project" value="GO_Central"/>
</dbReference>
<dbReference type="CDD" id="cd04150">
    <property type="entry name" value="Arf1_5_like"/>
    <property type="match status" value="1"/>
</dbReference>
<dbReference type="FunFam" id="3.40.50.300:FF:003500">
    <property type="entry name" value="ADP-ribosylation factor 1"/>
    <property type="match status" value="1"/>
</dbReference>
<dbReference type="Gene3D" id="3.40.50.300">
    <property type="entry name" value="P-loop containing nucleotide triphosphate hydrolases"/>
    <property type="match status" value="1"/>
</dbReference>
<dbReference type="InterPro" id="IPR045872">
    <property type="entry name" value="Arf1-5-like"/>
</dbReference>
<dbReference type="InterPro" id="IPR027417">
    <property type="entry name" value="P-loop_NTPase"/>
</dbReference>
<dbReference type="InterPro" id="IPR005225">
    <property type="entry name" value="Small_GTP-bd"/>
</dbReference>
<dbReference type="InterPro" id="IPR024156">
    <property type="entry name" value="Small_GTPase_ARF"/>
</dbReference>
<dbReference type="InterPro" id="IPR006689">
    <property type="entry name" value="Small_GTPase_ARF/SAR"/>
</dbReference>
<dbReference type="NCBIfam" id="TIGR00231">
    <property type="entry name" value="small_GTP"/>
    <property type="match status" value="1"/>
</dbReference>
<dbReference type="PANTHER" id="PTHR11711">
    <property type="entry name" value="ADP RIBOSYLATION FACTOR-RELATED"/>
    <property type="match status" value="1"/>
</dbReference>
<dbReference type="Pfam" id="PF00025">
    <property type="entry name" value="Arf"/>
    <property type="match status" value="1"/>
</dbReference>
<dbReference type="PRINTS" id="PR00328">
    <property type="entry name" value="SAR1GTPBP"/>
</dbReference>
<dbReference type="SMART" id="SM00177">
    <property type="entry name" value="ARF"/>
    <property type="match status" value="1"/>
</dbReference>
<dbReference type="SMART" id="SM00175">
    <property type="entry name" value="RAB"/>
    <property type="match status" value="1"/>
</dbReference>
<dbReference type="SMART" id="SM00178">
    <property type="entry name" value="SAR"/>
    <property type="match status" value="1"/>
</dbReference>
<dbReference type="SUPFAM" id="SSF52540">
    <property type="entry name" value="P-loop containing nucleoside triphosphate hydrolases"/>
    <property type="match status" value="1"/>
</dbReference>
<dbReference type="PROSITE" id="PS51417">
    <property type="entry name" value="ARF"/>
    <property type="match status" value="1"/>
</dbReference>
<evidence type="ECO:0000250" key="1">
    <source>
        <dbReference type="UniProtKB" id="P84077"/>
    </source>
</evidence>
<evidence type="ECO:0000250" key="2">
    <source>
        <dbReference type="UniProtKB" id="P84080"/>
    </source>
</evidence>
<evidence type="ECO:0000255" key="3"/>
<evidence type="ECO:0000269" key="4">
    <source>
    </source>
</evidence>
<evidence type="ECO:0000269" key="5">
    <source>
    </source>
</evidence>
<evidence type="ECO:0000269" key="6">
    <source>
    </source>
</evidence>
<evidence type="ECO:0000269" key="7">
    <source>
    </source>
</evidence>
<evidence type="ECO:0000305" key="8"/>
<evidence type="ECO:0000305" key="9">
    <source>
    </source>
</evidence>
<evidence type="ECO:0000312" key="10">
    <source>
        <dbReference type="WormBase" id="B0336.2"/>
    </source>
</evidence>
<name>ARF12_CAEEL</name>
<protein>
    <recommendedName>
        <fullName>ADP-ribosylation factor 1-like 2</fullName>
        <ecNumber evidence="1">3.6.5.2</ecNumber>
    </recommendedName>
    <alternativeName>
        <fullName>ADP-ribosylation factor-related protein 1</fullName>
    </alternativeName>
</protein>
<organism>
    <name type="scientific">Caenorhabditis elegans</name>
    <dbReference type="NCBI Taxonomy" id="6239"/>
    <lineage>
        <taxon>Eukaryota</taxon>
        <taxon>Metazoa</taxon>
        <taxon>Ecdysozoa</taxon>
        <taxon>Nematoda</taxon>
        <taxon>Chromadorea</taxon>
        <taxon>Rhabditida</taxon>
        <taxon>Rhabditina</taxon>
        <taxon>Rhabditomorpha</taxon>
        <taxon>Rhabditoidea</taxon>
        <taxon>Rhabditidae</taxon>
        <taxon>Peloderinae</taxon>
        <taxon>Caenorhabditis</taxon>
    </lineage>
</organism>
<accession>Q10943</accession>